<feature type="chain" id="PRO_0000123914" description="1-aminocyclopropane-1-carboxylate synthase 4">
    <location>
        <begin position="1"/>
        <end position="476"/>
    </location>
</feature>
<feature type="modified residue" description="N6-(pyridoxal phosphate)lysine" evidence="1">
    <location>
        <position position="282"/>
    </location>
</feature>
<feature type="sequence conflict" description="In Ref. 2; CAA41857." evidence="3" ref="2">
    <original>V</original>
    <variation>A</variation>
    <location>
        <position position="15"/>
    </location>
</feature>
<feature type="sequence conflict" description="In Ref. 4; AAA81581." evidence="3" ref="4">
    <original>T</original>
    <variation>A</variation>
    <location>
        <position position="82"/>
    </location>
</feature>
<feature type="sequence conflict" description="In Ref. 2; CAA41857 and 5; AAA68623." evidence="3" ref="2 5">
    <original>S</original>
    <variation>P</variation>
    <location>
        <position position="253"/>
    </location>
</feature>
<keyword id="KW-0266">Ethylene biosynthesis</keyword>
<keyword id="KW-0292">Fruit ripening</keyword>
<keyword id="KW-0456">Lyase</keyword>
<keyword id="KW-0663">Pyridoxal phosphate</keyword>
<keyword id="KW-1185">Reference proteome</keyword>
<keyword id="KW-0949">S-adenosyl-L-methionine</keyword>
<comment type="function">
    <text>Catalyzes the formation of 1-aminocyclopropane-1-carboxylate, a direct precursor of ethylene in higher plants.</text>
</comment>
<comment type="catalytic activity">
    <reaction>
        <text>S-adenosyl-L-methionine = 1-aminocyclopropane-1-carboxylate + S-methyl-5'-thioadenosine + H(+)</text>
        <dbReference type="Rhea" id="RHEA:21744"/>
        <dbReference type="ChEBI" id="CHEBI:15378"/>
        <dbReference type="ChEBI" id="CHEBI:17509"/>
        <dbReference type="ChEBI" id="CHEBI:58360"/>
        <dbReference type="ChEBI" id="CHEBI:59789"/>
        <dbReference type="EC" id="4.4.1.14"/>
    </reaction>
</comment>
<comment type="cofactor">
    <cofactor>
        <name>pyridoxal 5'-phosphate</name>
        <dbReference type="ChEBI" id="CHEBI:597326"/>
    </cofactor>
</comment>
<comment type="pathway">
    <text>Alkene biosynthesis; ethylene biosynthesis via S-adenosyl-L-methionine; ethylene from S-adenosyl-L-methionine: step 1/2.</text>
</comment>
<comment type="subunit">
    <text>Homodimer.</text>
</comment>
<comment type="induction">
    <text evidence="2">Associated with fruit ripening, but unresponsive to auxin treatment in vegetative tissue.</text>
</comment>
<comment type="similarity">
    <text evidence="3">Belongs to the class-I pyridoxal-phosphate-dependent aminotransferase family.</text>
</comment>
<dbReference type="EC" id="4.4.1.14"/>
<dbReference type="EMBL" id="M88487">
    <property type="protein sequence ID" value="AAA03164.1"/>
    <property type="molecule type" value="Unassigned_DNA"/>
</dbReference>
<dbReference type="EMBL" id="X59146">
    <property type="protein sequence ID" value="CAA41857.1"/>
    <property type="molecule type" value="mRNA"/>
</dbReference>
<dbReference type="EMBL" id="M63490">
    <property type="protein sequence ID" value="AAA34131.1"/>
    <property type="molecule type" value="mRNA"/>
</dbReference>
<dbReference type="EMBL" id="M38705">
    <property type="protein sequence ID" value="AAA81581.1"/>
    <property type="molecule type" value="mRNA"/>
</dbReference>
<dbReference type="EMBL" id="M83329">
    <property type="protein sequence ID" value="AAA68623.1"/>
    <property type="molecule type" value="mRNA"/>
</dbReference>
<dbReference type="PIR" id="S19679">
    <property type="entry name" value="S19679"/>
</dbReference>
<dbReference type="RefSeq" id="NP_001233875.1">
    <property type="nucleotide sequence ID" value="NM_001246946.1"/>
</dbReference>
<dbReference type="RefSeq" id="NP_001234280.1">
    <property type="nucleotide sequence ID" value="NM_001247351.1"/>
</dbReference>
<dbReference type="SMR" id="P29535"/>
<dbReference type="FunCoup" id="P29535">
    <property type="interactions" value="314"/>
</dbReference>
<dbReference type="STRING" id="4081.P29535"/>
<dbReference type="PaxDb" id="4081-Solyc05g050010.2.1"/>
<dbReference type="GeneID" id="778356"/>
<dbReference type="KEGG" id="sly:778356"/>
<dbReference type="eggNOG" id="KOG0256">
    <property type="taxonomic scope" value="Eukaryota"/>
</dbReference>
<dbReference type="InParanoid" id="P29535"/>
<dbReference type="OrthoDB" id="691673at2759"/>
<dbReference type="UniPathway" id="UPA00384">
    <property type="reaction ID" value="UER00562"/>
</dbReference>
<dbReference type="Proteomes" id="UP000004994">
    <property type="component" value="Unplaced"/>
</dbReference>
<dbReference type="ExpressionAtlas" id="P29535">
    <property type="expression patterns" value="baseline and differential"/>
</dbReference>
<dbReference type="GO" id="GO:0016847">
    <property type="term" value="F:1-aminocyclopropane-1-carboxylate synthase activity"/>
    <property type="evidence" value="ECO:0007669"/>
    <property type="project" value="UniProtKB-EC"/>
</dbReference>
<dbReference type="GO" id="GO:0030170">
    <property type="term" value="F:pyridoxal phosphate binding"/>
    <property type="evidence" value="ECO:0007669"/>
    <property type="project" value="InterPro"/>
</dbReference>
<dbReference type="GO" id="GO:0008483">
    <property type="term" value="F:transaminase activity"/>
    <property type="evidence" value="ECO:0000318"/>
    <property type="project" value="GO_Central"/>
</dbReference>
<dbReference type="GO" id="GO:0006520">
    <property type="term" value="P:amino acid metabolic process"/>
    <property type="evidence" value="ECO:0000318"/>
    <property type="project" value="GO_Central"/>
</dbReference>
<dbReference type="GO" id="GO:0009693">
    <property type="term" value="P:ethylene biosynthetic process"/>
    <property type="evidence" value="ECO:0007669"/>
    <property type="project" value="UniProtKB-UniPathway"/>
</dbReference>
<dbReference type="GO" id="GO:0009835">
    <property type="term" value="P:fruit ripening"/>
    <property type="evidence" value="ECO:0007669"/>
    <property type="project" value="UniProtKB-KW"/>
</dbReference>
<dbReference type="CDD" id="cd00609">
    <property type="entry name" value="AAT_like"/>
    <property type="match status" value="1"/>
</dbReference>
<dbReference type="Gene3D" id="3.90.1150.10">
    <property type="entry name" value="Aspartate Aminotransferase, domain 1"/>
    <property type="match status" value="1"/>
</dbReference>
<dbReference type="Gene3D" id="3.40.640.10">
    <property type="entry name" value="Type I PLP-dependent aspartate aminotransferase-like (Major domain)"/>
    <property type="match status" value="1"/>
</dbReference>
<dbReference type="InterPro" id="IPR004839">
    <property type="entry name" value="Aminotransferase_I/II_large"/>
</dbReference>
<dbReference type="InterPro" id="IPR050478">
    <property type="entry name" value="Ethylene_sulfur-biosynth"/>
</dbReference>
<dbReference type="InterPro" id="IPR004838">
    <property type="entry name" value="NHTrfase_class1_PyrdxlP-BS"/>
</dbReference>
<dbReference type="InterPro" id="IPR015424">
    <property type="entry name" value="PyrdxlP-dep_Trfase"/>
</dbReference>
<dbReference type="InterPro" id="IPR015421">
    <property type="entry name" value="PyrdxlP-dep_Trfase_major"/>
</dbReference>
<dbReference type="InterPro" id="IPR015422">
    <property type="entry name" value="PyrdxlP-dep_Trfase_small"/>
</dbReference>
<dbReference type="PANTHER" id="PTHR43795:SF42">
    <property type="entry name" value="1-AMINOCYCLOPROPANE-1-CARBOXYLATE SYNTHASE 4"/>
    <property type="match status" value="1"/>
</dbReference>
<dbReference type="PANTHER" id="PTHR43795">
    <property type="entry name" value="BIFUNCTIONAL ASPARTATE AMINOTRANSFERASE AND GLUTAMATE/ASPARTATE-PREPHENATE AMINOTRANSFERASE-RELATED"/>
    <property type="match status" value="1"/>
</dbReference>
<dbReference type="Pfam" id="PF00155">
    <property type="entry name" value="Aminotran_1_2"/>
    <property type="match status" value="1"/>
</dbReference>
<dbReference type="PRINTS" id="PR00753">
    <property type="entry name" value="ACCSYNTHASE"/>
</dbReference>
<dbReference type="SUPFAM" id="SSF53383">
    <property type="entry name" value="PLP-dependent transferases"/>
    <property type="match status" value="1"/>
</dbReference>
<dbReference type="PROSITE" id="PS00105">
    <property type="entry name" value="AA_TRANSFER_CLASS_1"/>
    <property type="match status" value="1"/>
</dbReference>
<evidence type="ECO:0000250" key="1"/>
<evidence type="ECO:0000269" key="2">
    <source>
    </source>
</evidence>
<evidence type="ECO:0000305" key="3"/>
<accession>P29535</accession>
<accession>Q42894</accession>
<reference key="1">
    <citation type="journal article" date="1993" name="J. Biol. Chem.">
        <title>LE-ACS4, a fruit ripening and wound-induced 1-aminocyclopropane-1-carboxylate synthase gene of tomato (Lycopersicon esculentum). Expression in Escherichia coli, structural characterization, expression characteristics, and phylogenetic analysis.</title>
        <authorList>
            <person name="Lincoln J.E."/>
            <person name="Campbell A.D."/>
            <person name="Oetiker J."/>
            <person name="Rottmann W.H."/>
            <person name="Oeller P.W."/>
            <person name="Shen N.F."/>
            <person name="Theologis A."/>
        </authorList>
    </citation>
    <scope>NUCLEOTIDE SEQUENCE</scope>
    <source>
        <strain>cv. Caruso</strain>
        <tissue>Etiolated hypocotyl</tissue>
    </source>
</reference>
<reference key="2">
    <citation type="journal article" date="1991" name="J. Mol. Biol.">
        <title>1-aminocyclopropane-1-carboxylate synthase in tomato is encoded by a multigene family whose transcription is induced during fruit and floral senescence.</title>
        <authorList>
            <person name="Rottmann W.H."/>
            <person name="Peter G.F."/>
            <person name="Oeller P.W."/>
            <person name="Keller J.A."/>
            <person name="Shen N.F."/>
            <person name="Nagy B.P."/>
            <person name="Taylor L.P."/>
            <person name="Campbell A.D."/>
            <person name="Theologis A."/>
        </authorList>
    </citation>
    <scope>NUCLEOTIDE SEQUENCE [MRNA]</scope>
    <source>
        <tissue>Etiolated hypocotyl</tissue>
    </source>
</reference>
<reference key="3">
    <citation type="journal article" date="1991" name="Proc. Natl. Acad. Sci. U.S.A.">
        <title>Differential expression of two genes for 1-aminocyclopropane-1-carboxylate synthase in tomato fruits.</title>
        <authorList>
            <person name="Olson D.C."/>
            <person name="White J.A."/>
            <person name="Edelman L."/>
            <person name="Harkins R.N."/>
            <person name="Kende H."/>
        </authorList>
    </citation>
    <scope>NUCLEOTIDE SEQUENCE [MRNA]</scope>
</reference>
<reference key="4">
    <citation type="journal article" date="1990" name="Proc. Natl. Acad. Sci. U.S.A.">
        <title>Cloning and sequence of two different cDNAs encoding 1-aminocyclopropane-1-carboxylate synthase in tomato.</title>
        <authorList>
            <person name="van der Straeten D."/>
            <person name="van Wiemeersch L."/>
            <person name="Goodman H.M."/>
            <person name="van Montagu M."/>
        </authorList>
    </citation>
    <scope>NUCLEOTIDE SEQUENCE [MRNA] OF 20-159</scope>
    <source>
        <strain>cv. Orlando</strain>
        <tissue>Fruit</tissue>
    </source>
</reference>
<reference key="5">
    <citation type="journal article" date="1992" name="Proc. Natl. Acad. Sci. U.S.A.">
        <title>Differential accumulation of transcripts for four tomato 1-aminocyclopropane-1-carboxylate synthase homologs under various conditions.</title>
        <authorList>
            <person name="Yip W.K."/>
            <person name="Moore T."/>
            <person name="Yang S.F."/>
        </authorList>
    </citation>
    <scope>NUCLEOTIDE SEQUENCE [MRNA] OF 235-307</scope>
    <scope>INDUCTION</scope>
    <source>
        <tissue>Pericarp</tissue>
    </source>
</reference>
<gene>
    <name type="primary">ACS4</name>
    <name type="synonym">ACC4</name>
    <name type="synonym">BTAS4</name>
    <name type="synonym">PCVV4B</name>
</gene>
<organism>
    <name type="scientific">Solanum lycopersicum</name>
    <name type="common">Tomato</name>
    <name type="synonym">Lycopersicon esculentum</name>
    <dbReference type="NCBI Taxonomy" id="4081"/>
    <lineage>
        <taxon>Eukaryota</taxon>
        <taxon>Viridiplantae</taxon>
        <taxon>Streptophyta</taxon>
        <taxon>Embryophyta</taxon>
        <taxon>Tracheophyta</taxon>
        <taxon>Spermatophyta</taxon>
        <taxon>Magnoliopsida</taxon>
        <taxon>eudicotyledons</taxon>
        <taxon>Gunneridae</taxon>
        <taxon>Pentapetalae</taxon>
        <taxon>asterids</taxon>
        <taxon>lamiids</taxon>
        <taxon>Solanales</taxon>
        <taxon>Solanaceae</taxon>
        <taxon>Solanoideae</taxon>
        <taxon>Solaneae</taxon>
        <taxon>Solanum</taxon>
        <taxon>Solanum subgen. Lycopersicon</taxon>
    </lineage>
</organism>
<sequence length="476" mass="53537">MDLETSEISNYKSSVVLSKLASNEQHGENSPYFDGWKAYDNDPFHLVNNLNGVIQMGLAENQLSVDLIEEWIKRNPKASICTNDGIESFRRIANFQDYHGLPEFTNAIAKFMEKTRGGKVKFDAKRVVMAGGATGANETLILCLADPGDAFLVPTPYYPGFNRDLRWRSGVQLLPISCKSCNNFKITIEAIEEAYEKGQQANVKIKGLILTNPCNPLGTILDRDTLKKISTFTNEHNIHLVCDEIYAATVFNSPKFVSIAEIINEDNCINKDLVHIVSSLSKDLGFPGFRVGIVYSFNDDVVNCARKMSSFGLVSTQTQHLLAFMLSDDEFVEEFLIESAKRLRERYEKFTRGLEEIGIKCLESNAGVYCWMDLRSLLKEATLDAEMSLWKLIINEVKLNVSPGSSFNCSEVGWFRVCFANIDDQTMEIALARIRMFMDAYNNVNKNGVMKNKHNGRGTTYDLTPQMGSTMKMLLA</sequence>
<name>1A14_SOLLC</name>
<proteinExistence type="evidence at transcript level"/>
<protein>
    <recommendedName>
        <fullName>1-aminocyclopropane-1-carboxylate synthase 4</fullName>
        <shortName>ACC synthase 4</shortName>
        <ecNumber>4.4.1.14</ecNumber>
    </recommendedName>
    <alternativeName>
        <fullName>Le-ACS4</fullName>
        <shortName>ACS-4</shortName>
    </alternativeName>
    <alternativeName>
        <fullName>S-adenosyl-L-methionine methylthioadenosine-lyase 4</fullName>
    </alternativeName>
</protein>